<accession>Q7SZN2</accession>
<dbReference type="EC" id="2.3.2.27"/>
<dbReference type="EMBL" id="BC056330">
    <property type="protein sequence ID" value="AAH56330.1"/>
    <property type="molecule type" value="mRNA"/>
</dbReference>
<dbReference type="EMBL" id="BC069061">
    <property type="protein sequence ID" value="AAH69061.1"/>
    <property type="molecule type" value="mRNA"/>
</dbReference>
<dbReference type="RefSeq" id="NP_999915.1">
    <property type="nucleotide sequence ID" value="NM_214750.1"/>
</dbReference>
<dbReference type="FunCoup" id="Q7SZN2">
    <property type="interactions" value="356"/>
</dbReference>
<dbReference type="STRING" id="7955.ENSDARP00000149585"/>
<dbReference type="PaxDb" id="7955-ENSDARP00000038867"/>
<dbReference type="GeneID" id="406612"/>
<dbReference type="KEGG" id="dre:406612"/>
<dbReference type="AGR" id="ZFIN:ZDB-GENE-040426-2572"/>
<dbReference type="CTD" id="81790"/>
<dbReference type="ZFIN" id="ZDB-GENE-040426-2572">
    <property type="gene designation" value="rnf170"/>
</dbReference>
<dbReference type="eggNOG" id="KOG2164">
    <property type="taxonomic scope" value="Eukaryota"/>
</dbReference>
<dbReference type="InParanoid" id="Q7SZN2"/>
<dbReference type="OrthoDB" id="9049620at2759"/>
<dbReference type="PhylomeDB" id="Q7SZN2"/>
<dbReference type="UniPathway" id="UPA00143"/>
<dbReference type="PRO" id="PR:Q7SZN2"/>
<dbReference type="Proteomes" id="UP000000437">
    <property type="component" value="Chromosome 5"/>
</dbReference>
<dbReference type="GO" id="GO:0005789">
    <property type="term" value="C:endoplasmic reticulum membrane"/>
    <property type="evidence" value="ECO:0007669"/>
    <property type="project" value="UniProtKB-SubCell"/>
</dbReference>
<dbReference type="GO" id="GO:0061630">
    <property type="term" value="F:ubiquitin protein ligase activity"/>
    <property type="evidence" value="ECO:0007669"/>
    <property type="project" value="InterPro"/>
</dbReference>
<dbReference type="GO" id="GO:0008270">
    <property type="term" value="F:zinc ion binding"/>
    <property type="evidence" value="ECO:0007669"/>
    <property type="project" value="UniProtKB-KW"/>
</dbReference>
<dbReference type="GO" id="GO:0043009">
    <property type="term" value="P:chordate embryonic development"/>
    <property type="evidence" value="ECO:0000315"/>
    <property type="project" value="ZFIN"/>
</dbReference>
<dbReference type="GO" id="GO:0016567">
    <property type="term" value="P:protein ubiquitination"/>
    <property type="evidence" value="ECO:0007669"/>
    <property type="project" value="UniProtKB-UniPathway"/>
</dbReference>
<dbReference type="CDD" id="cd16553">
    <property type="entry name" value="RING-HC_RNF170"/>
    <property type="match status" value="1"/>
</dbReference>
<dbReference type="FunFam" id="3.30.40.10:FF:001503">
    <property type="entry name" value="E3 ubiquitin-protein ligase RNF170"/>
    <property type="match status" value="1"/>
</dbReference>
<dbReference type="Gene3D" id="3.30.40.10">
    <property type="entry name" value="Zinc/RING finger domain, C3HC4 (zinc finger)"/>
    <property type="match status" value="1"/>
</dbReference>
<dbReference type="InterPro" id="IPR010652">
    <property type="entry name" value="DUF1232"/>
</dbReference>
<dbReference type="InterPro" id="IPR038896">
    <property type="entry name" value="RNF170"/>
</dbReference>
<dbReference type="InterPro" id="IPR027370">
    <property type="entry name" value="Znf-RING_euk"/>
</dbReference>
<dbReference type="InterPro" id="IPR001841">
    <property type="entry name" value="Znf_RING"/>
</dbReference>
<dbReference type="InterPro" id="IPR013083">
    <property type="entry name" value="Znf_RING/FYVE/PHD"/>
</dbReference>
<dbReference type="InterPro" id="IPR017907">
    <property type="entry name" value="Znf_RING_CS"/>
</dbReference>
<dbReference type="PANTHER" id="PTHR22894:SF1">
    <property type="entry name" value="E3 UBIQUITIN-PROTEIN LIGASE RNF170"/>
    <property type="match status" value="1"/>
</dbReference>
<dbReference type="PANTHER" id="PTHR22894">
    <property type="entry name" value="RING-TYPE DOMAIN-CONTAINING PROTEIN"/>
    <property type="match status" value="1"/>
</dbReference>
<dbReference type="Pfam" id="PF06803">
    <property type="entry name" value="DUF1232"/>
    <property type="match status" value="1"/>
</dbReference>
<dbReference type="Pfam" id="PF13445">
    <property type="entry name" value="zf-RING_UBOX"/>
    <property type="match status" value="1"/>
</dbReference>
<dbReference type="SMART" id="SM00184">
    <property type="entry name" value="RING"/>
    <property type="match status" value="1"/>
</dbReference>
<dbReference type="SUPFAM" id="SSF57850">
    <property type="entry name" value="RING/U-box"/>
    <property type="match status" value="1"/>
</dbReference>
<dbReference type="PROSITE" id="PS00518">
    <property type="entry name" value="ZF_RING_1"/>
    <property type="match status" value="1"/>
</dbReference>
<dbReference type="PROSITE" id="PS50089">
    <property type="entry name" value="ZF_RING_2"/>
    <property type="match status" value="1"/>
</dbReference>
<protein>
    <recommendedName>
        <fullName>E3 ubiquitin-protein ligase RNF170</fullName>
        <ecNumber>2.3.2.27</ecNumber>
    </recommendedName>
    <alternativeName>
        <fullName>RING finger protein 170</fullName>
    </alternativeName>
    <alternativeName>
        <fullName evidence="5">RING-type E3 ubiquitin transferase RNF170</fullName>
    </alternativeName>
</protein>
<keyword id="KW-0256">Endoplasmic reticulum</keyword>
<keyword id="KW-0472">Membrane</keyword>
<keyword id="KW-0479">Metal-binding</keyword>
<keyword id="KW-1185">Reference proteome</keyword>
<keyword id="KW-0808">Transferase</keyword>
<keyword id="KW-0812">Transmembrane</keyword>
<keyword id="KW-1133">Transmembrane helix</keyword>
<keyword id="KW-0833">Ubl conjugation pathway</keyword>
<keyword id="KW-0862">Zinc</keyword>
<keyword id="KW-0863">Zinc-finger</keyword>
<name>RN170_DANRE</name>
<comment type="function">
    <text evidence="1">E3 ubiquitin-protein ligase that plays an essential role in stimulus-induced inositol 1,4,5-trisphosphate receptor (ITPR) ubiquitination and degradation via the endoplasmic reticulum-associated degradation (ERAD) pathway. Also involved in ITPR turnover in resting cells.</text>
</comment>
<comment type="catalytic activity">
    <reaction>
        <text>S-ubiquitinyl-[E2 ubiquitin-conjugating enzyme]-L-cysteine + [acceptor protein]-L-lysine = [E2 ubiquitin-conjugating enzyme]-L-cysteine + N(6)-ubiquitinyl-[acceptor protein]-L-lysine.</text>
        <dbReference type="EC" id="2.3.2.27"/>
    </reaction>
</comment>
<comment type="pathway">
    <text>Protein modification; protein ubiquitination.</text>
</comment>
<comment type="subcellular location">
    <subcellularLocation>
        <location evidence="1">Endoplasmic reticulum membrane</location>
        <topology evidence="1">Multi-pass membrane protein</topology>
    </subcellularLocation>
</comment>
<comment type="tissue specificity">
    <text evidence="4">Highly expressed in the developing brain, and less within intersomitic structures of the trunk.</text>
</comment>
<comment type="disruption phenotype">
    <text evidence="4">Morpholino knockdown of RNF170 results in developmental defects visible by 48 hpf, including microphthalmia, microcephaly, and loss of motility. Neurogenesis in the cranium is remarkably reduced, specifically in the mid-hindbrain region.</text>
</comment>
<proteinExistence type="evidence at transcript level"/>
<evidence type="ECO:0000250" key="1">
    <source>
        <dbReference type="UniProtKB" id="Q96K19"/>
    </source>
</evidence>
<evidence type="ECO:0000255" key="2"/>
<evidence type="ECO:0000255" key="3">
    <source>
        <dbReference type="PROSITE-ProRule" id="PRU00175"/>
    </source>
</evidence>
<evidence type="ECO:0000269" key="4">
    <source>
    </source>
</evidence>
<evidence type="ECO:0000305" key="5"/>
<sequence length="266" mass="29628">MEGSVCVDGAAAPAPDEASLIEGVSNAVLLVLVLSVTLLAGLTTLLCRSEQQRIHPESQERVRVVREQLQAEQVSSESRHQFYSDMSCPVCLQQAVLPVETNCGHLFCGSCIIAYWRYGTWLGAISCPICRQMVTLLFPLFQDSEQSAVAADSPVEPTLILTDISDYNRRFSGQPRSLLDRLRDVPTLLRHAFREMFSVGGLFWMFRVRILLCVCGALAYLVSPLDFLPEGVLGLLGFLDDFFVILLLFIYISIMYREVVTQRLAG</sequence>
<feature type="chain" id="PRO_0000280702" description="E3 ubiquitin-protein ligase RNF170">
    <location>
        <begin position="1"/>
        <end position="266"/>
    </location>
</feature>
<feature type="topological domain" description="Lumenal" evidence="2">
    <location>
        <begin position="1"/>
        <end position="26"/>
    </location>
</feature>
<feature type="transmembrane region" description="Helical" evidence="2">
    <location>
        <begin position="27"/>
        <end position="47"/>
    </location>
</feature>
<feature type="topological domain" description="Cytoplasmic" evidence="2">
    <location>
        <begin position="48"/>
        <end position="209"/>
    </location>
</feature>
<feature type="transmembrane region" description="Helical" evidence="2">
    <location>
        <begin position="210"/>
        <end position="230"/>
    </location>
</feature>
<feature type="topological domain" description="Lumenal" evidence="2">
    <location>
        <position position="231"/>
    </location>
</feature>
<feature type="transmembrane region" description="Helical" evidence="2">
    <location>
        <begin position="232"/>
        <end position="252"/>
    </location>
</feature>
<feature type="topological domain" description="Cytoplasmic" evidence="2">
    <location>
        <begin position="253"/>
        <end position="266"/>
    </location>
</feature>
<feature type="zinc finger region" description="RING-type" evidence="3">
    <location>
        <begin position="88"/>
        <end position="131"/>
    </location>
</feature>
<reference key="1">
    <citation type="submission" date="2004-04" db="EMBL/GenBank/DDBJ databases">
        <authorList>
            <consortium name="NIH - Zebrafish Gene Collection (ZGC) project"/>
        </authorList>
    </citation>
    <scope>NUCLEOTIDE SEQUENCE [LARGE SCALE MRNA]</scope>
    <source>
        <tissue>Embryo</tissue>
    </source>
</reference>
<reference key="2">
    <citation type="journal article" date="2019" name="Nat. Commun.">
        <title>Bi-allelic variants in RNF170 are associated with hereditary spastic paraplegia.</title>
        <authorList>
            <person name="Wagner M."/>
            <person name="Osborn D.P.S."/>
            <person name="Gehweiler I."/>
            <person name="Nagel M."/>
            <person name="Ulmer U."/>
            <person name="Bakhtiari S."/>
            <person name="Amouri R."/>
            <person name="Boostani R."/>
            <person name="Hentati F."/>
            <person name="Hockley M.M."/>
            <person name="Hoelbling B."/>
            <person name="Schwarzmayr T."/>
            <person name="Karimiani E.G."/>
            <person name="Kernstock C."/>
            <person name="Maroofian R."/>
            <person name="Mueller-Felber W."/>
            <person name="Ozkan E."/>
            <person name="Padilla-Lopez S."/>
            <person name="Reich S."/>
            <person name="Reichbauer J."/>
            <person name="Darvish H."/>
            <person name="Shahmohammadibeni N."/>
            <person name="Tafakhori A."/>
            <person name="Vill K."/>
            <person name="Zuchner S."/>
            <person name="Kruer M.C."/>
            <person name="Winkelmann J."/>
            <person name="Jamshidi Y."/>
            <person name="Schuele R."/>
        </authorList>
    </citation>
    <scope>DISRUPTION PHENOTYPE</scope>
    <scope>TISSUE SPECIFICITY</scope>
</reference>
<organism>
    <name type="scientific">Danio rerio</name>
    <name type="common">Zebrafish</name>
    <name type="synonym">Brachydanio rerio</name>
    <dbReference type="NCBI Taxonomy" id="7955"/>
    <lineage>
        <taxon>Eukaryota</taxon>
        <taxon>Metazoa</taxon>
        <taxon>Chordata</taxon>
        <taxon>Craniata</taxon>
        <taxon>Vertebrata</taxon>
        <taxon>Euteleostomi</taxon>
        <taxon>Actinopterygii</taxon>
        <taxon>Neopterygii</taxon>
        <taxon>Teleostei</taxon>
        <taxon>Ostariophysi</taxon>
        <taxon>Cypriniformes</taxon>
        <taxon>Danionidae</taxon>
        <taxon>Danioninae</taxon>
        <taxon>Danio</taxon>
    </lineage>
</organism>
<gene>
    <name type="primary">rnf170</name>
    <name type="ORF">zgc:65779</name>
</gene>